<dbReference type="EMBL" id="AE006470">
    <property type="protein sequence ID" value="AAM72711.1"/>
    <property type="molecule type" value="Genomic_DNA"/>
</dbReference>
<dbReference type="RefSeq" id="NP_662369.1">
    <property type="nucleotide sequence ID" value="NC_002932.3"/>
</dbReference>
<dbReference type="RefSeq" id="WP_010933150.1">
    <property type="nucleotide sequence ID" value="NC_002932.3"/>
</dbReference>
<dbReference type="SMR" id="Q8KCD8"/>
<dbReference type="STRING" id="194439.CT1484"/>
<dbReference type="EnsemblBacteria" id="AAM72711">
    <property type="protein sequence ID" value="AAM72711"/>
    <property type="gene ID" value="CT1484"/>
</dbReference>
<dbReference type="KEGG" id="cte:CT1484"/>
<dbReference type="PATRIC" id="fig|194439.7.peg.1345"/>
<dbReference type="eggNOG" id="COG0484">
    <property type="taxonomic scope" value="Bacteria"/>
</dbReference>
<dbReference type="HOGENOM" id="CLU_017633_0_7_10"/>
<dbReference type="OrthoDB" id="9779889at2"/>
<dbReference type="Proteomes" id="UP000001007">
    <property type="component" value="Chromosome"/>
</dbReference>
<dbReference type="GO" id="GO:0005737">
    <property type="term" value="C:cytoplasm"/>
    <property type="evidence" value="ECO:0007669"/>
    <property type="project" value="UniProtKB-SubCell"/>
</dbReference>
<dbReference type="GO" id="GO:0005524">
    <property type="term" value="F:ATP binding"/>
    <property type="evidence" value="ECO:0007669"/>
    <property type="project" value="InterPro"/>
</dbReference>
<dbReference type="GO" id="GO:0031072">
    <property type="term" value="F:heat shock protein binding"/>
    <property type="evidence" value="ECO:0007669"/>
    <property type="project" value="InterPro"/>
</dbReference>
<dbReference type="GO" id="GO:0051082">
    <property type="term" value="F:unfolded protein binding"/>
    <property type="evidence" value="ECO:0007669"/>
    <property type="project" value="UniProtKB-UniRule"/>
</dbReference>
<dbReference type="GO" id="GO:0008270">
    <property type="term" value="F:zinc ion binding"/>
    <property type="evidence" value="ECO:0007669"/>
    <property type="project" value="UniProtKB-UniRule"/>
</dbReference>
<dbReference type="GO" id="GO:0051085">
    <property type="term" value="P:chaperone cofactor-dependent protein refolding"/>
    <property type="evidence" value="ECO:0007669"/>
    <property type="project" value="TreeGrafter"/>
</dbReference>
<dbReference type="GO" id="GO:0006260">
    <property type="term" value="P:DNA replication"/>
    <property type="evidence" value="ECO:0007669"/>
    <property type="project" value="UniProtKB-KW"/>
</dbReference>
<dbReference type="GO" id="GO:0042026">
    <property type="term" value="P:protein refolding"/>
    <property type="evidence" value="ECO:0007669"/>
    <property type="project" value="TreeGrafter"/>
</dbReference>
<dbReference type="GO" id="GO:0009408">
    <property type="term" value="P:response to heat"/>
    <property type="evidence" value="ECO:0007669"/>
    <property type="project" value="InterPro"/>
</dbReference>
<dbReference type="CDD" id="cd06257">
    <property type="entry name" value="DnaJ"/>
    <property type="match status" value="1"/>
</dbReference>
<dbReference type="CDD" id="cd10747">
    <property type="entry name" value="DnaJ_C"/>
    <property type="match status" value="1"/>
</dbReference>
<dbReference type="CDD" id="cd10719">
    <property type="entry name" value="DnaJ_zf"/>
    <property type="match status" value="1"/>
</dbReference>
<dbReference type="FunFam" id="1.10.287.110:FF:000034">
    <property type="entry name" value="Chaperone protein DnaJ"/>
    <property type="match status" value="1"/>
</dbReference>
<dbReference type="FunFam" id="2.60.260.20:FF:000005">
    <property type="entry name" value="Chaperone protein dnaJ 1, mitochondrial"/>
    <property type="match status" value="1"/>
</dbReference>
<dbReference type="FunFam" id="2.10.230.10:FF:000002">
    <property type="entry name" value="Molecular chaperone DnaJ"/>
    <property type="match status" value="1"/>
</dbReference>
<dbReference type="Gene3D" id="1.10.287.110">
    <property type="entry name" value="DnaJ domain"/>
    <property type="match status" value="1"/>
</dbReference>
<dbReference type="Gene3D" id="2.10.230.10">
    <property type="entry name" value="Heat shock protein DnaJ, cysteine-rich domain"/>
    <property type="match status" value="1"/>
</dbReference>
<dbReference type="Gene3D" id="2.60.260.20">
    <property type="entry name" value="Urease metallochaperone UreE, N-terminal domain"/>
    <property type="match status" value="2"/>
</dbReference>
<dbReference type="HAMAP" id="MF_01152">
    <property type="entry name" value="DnaJ"/>
    <property type="match status" value="1"/>
</dbReference>
<dbReference type="InterPro" id="IPR012724">
    <property type="entry name" value="DnaJ"/>
</dbReference>
<dbReference type="InterPro" id="IPR002939">
    <property type="entry name" value="DnaJ_C"/>
</dbReference>
<dbReference type="InterPro" id="IPR001623">
    <property type="entry name" value="DnaJ_domain"/>
</dbReference>
<dbReference type="InterPro" id="IPR018253">
    <property type="entry name" value="DnaJ_domain_CS"/>
</dbReference>
<dbReference type="InterPro" id="IPR008971">
    <property type="entry name" value="HSP40/DnaJ_pept-bd"/>
</dbReference>
<dbReference type="InterPro" id="IPR001305">
    <property type="entry name" value="HSP_DnaJ_Cys-rich_dom"/>
</dbReference>
<dbReference type="InterPro" id="IPR036410">
    <property type="entry name" value="HSP_DnaJ_Cys-rich_dom_sf"/>
</dbReference>
<dbReference type="InterPro" id="IPR036869">
    <property type="entry name" value="J_dom_sf"/>
</dbReference>
<dbReference type="NCBIfam" id="TIGR02349">
    <property type="entry name" value="DnaJ_bact"/>
    <property type="match status" value="1"/>
</dbReference>
<dbReference type="NCBIfam" id="NF010874">
    <property type="entry name" value="PRK14281.1"/>
    <property type="match status" value="1"/>
</dbReference>
<dbReference type="PANTHER" id="PTHR43096:SF48">
    <property type="entry name" value="CHAPERONE PROTEIN DNAJ"/>
    <property type="match status" value="1"/>
</dbReference>
<dbReference type="PANTHER" id="PTHR43096">
    <property type="entry name" value="DNAJ HOMOLOG 1, MITOCHONDRIAL-RELATED"/>
    <property type="match status" value="1"/>
</dbReference>
<dbReference type="Pfam" id="PF00226">
    <property type="entry name" value="DnaJ"/>
    <property type="match status" value="1"/>
</dbReference>
<dbReference type="Pfam" id="PF01556">
    <property type="entry name" value="DnaJ_C"/>
    <property type="match status" value="1"/>
</dbReference>
<dbReference type="Pfam" id="PF00684">
    <property type="entry name" value="DnaJ_CXXCXGXG"/>
    <property type="match status" value="1"/>
</dbReference>
<dbReference type="PRINTS" id="PR00625">
    <property type="entry name" value="JDOMAIN"/>
</dbReference>
<dbReference type="SMART" id="SM00271">
    <property type="entry name" value="DnaJ"/>
    <property type="match status" value="1"/>
</dbReference>
<dbReference type="SUPFAM" id="SSF46565">
    <property type="entry name" value="Chaperone J-domain"/>
    <property type="match status" value="1"/>
</dbReference>
<dbReference type="SUPFAM" id="SSF57938">
    <property type="entry name" value="DnaJ/Hsp40 cysteine-rich domain"/>
    <property type="match status" value="1"/>
</dbReference>
<dbReference type="SUPFAM" id="SSF49493">
    <property type="entry name" value="HSP40/DnaJ peptide-binding domain"/>
    <property type="match status" value="2"/>
</dbReference>
<dbReference type="PROSITE" id="PS00636">
    <property type="entry name" value="DNAJ_1"/>
    <property type="match status" value="1"/>
</dbReference>
<dbReference type="PROSITE" id="PS50076">
    <property type="entry name" value="DNAJ_2"/>
    <property type="match status" value="1"/>
</dbReference>
<dbReference type="PROSITE" id="PS51188">
    <property type="entry name" value="ZF_CR"/>
    <property type="match status" value="1"/>
</dbReference>
<comment type="function">
    <text evidence="1">Participates actively in the response to hyperosmotic and heat shock by preventing the aggregation of stress-denatured proteins and by disaggregating proteins, also in an autonomous, DnaK-independent fashion. Unfolded proteins bind initially to DnaJ; upon interaction with the DnaJ-bound protein, DnaK hydrolyzes its bound ATP, resulting in the formation of a stable complex. GrpE releases ADP from DnaK; ATP binding to DnaK triggers the release of the substrate protein, thus completing the reaction cycle. Several rounds of ATP-dependent interactions between DnaJ, DnaK and GrpE are required for fully efficient folding. Also involved, together with DnaK and GrpE, in the DNA replication of plasmids through activation of initiation proteins.</text>
</comment>
<comment type="cofactor">
    <cofactor evidence="1">
        <name>Zn(2+)</name>
        <dbReference type="ChEBI" id="CHEBI:29105"/>
    </cofactor>
    <text evidence="1">Binds 2 Zn(2+) ions per monomer.</text>
</comment>
<comment type="subunit">
    <text evidence="1">Homodimer.</text>
</comment>
<comment type="subcellular location">
    <subcellularLocation>
        <location evidence="1">Cytoplasm</location>
    </subcellularLocation>
</comment>
<comment type="domain">
    <text evidence="1">The J domain is necessary and sufficient to stimulate DnaK ATPase activity. Zinc center 1 plays an important role in the autonomous, DnaK-independent chaperone activity of DnaJ. Zinc center 2 is essential for interaction with DnaK and for DnaJ activity.</text>
</comment>
<comment type="similarity">
    <text evidence="1">Belongs to the DnaJ family.</text>
</comment>
<gene>
    <name evidence="1" type="primary">dnaJ</name>
    <name type="ordered locus">CT1484</name>
</gene>
<sequence>MKRDYYEILGVARSADKDEIKKAYRKLALKYHPDKNPDNKEAEEKFKEVNEAYEVLSNDDKRRRYDQFGHAGVGSSAASGSGPGGAGYGDINDIFSAFNDMFSGGGGRARTGGSPFSGFEDVFSGGFSGSGSGRRRSAGIQGTDLKIRLKLTLEEIAKGVEKTIKIKKLVTCRECNGTGSKSGKTEICPTCHGSGEVRQATKTMFGQFMNISVCPTCGGEGRVVKDRCPSCYGEGIKQGEATVKITVPAGVQDGNYLTLQGQGNAGPRGGAPGDLIVVIEEKPHELFKRNGDDIIYDLSVGFPDLVMGTKIEVPTLDGHVKLTIPAGTQPNTMLRIGGKGIGHLRGGGSGDLYVRVNVFVPKEVSGKDRDLLKELKKSTVICPNHGDENHEKSIFEKAKDIFS</sequence>
<reference key="1">
    <citation type="journal article" date="2002" name="Proc. Natl. Acad. Sci. U.S.A.">
        <title>The complete genome sequence of Chlorobium tepidum TLS, a photosynthetic, anaerobic, green-sulfur bacterium.</title>
        <authorList>
            <person name="Eisen J.A."/>
            <person name="Nelson K.E."/>
            <person name="Paulsen I.T."/>
            <person name="Heidelberg J.F."/>
            <person name="Wu M."/>
            <person name="Dodson R.J."/>
            <person name="DeBoy R.T."/>
            <person name="Gwinn M.L."/>
            <person name="Nelson W.C."/>
            <person name="Haft D.H."/>
            <person name="Hickey E.K."/>
            <person name="Peterson J.D."/>
            <person name="Durkin A.S."/>
            <person name="Kolonay J.F."/>
            <person name="Yang F."/>
            <person name="Holt I.E."/>
            <person name="Umayam L.A."/>
            <person name="Mason T.M."/>
            <person name="Brenner M."/>
            <person name="Shea T.P."/>
            <person name="Parksey D.S."/>
            <person name="Nierman W.C."/>
            <person name="Feldblyum T.V."/>
            <person name="Hansen C.L."/>
            <person name="Craven M.B."/>
            <person name="Radune D."/>
            <person name="Vamathevan J.J."/>
            <person name="Khouri H.M."/>
            <person name="White O."/>
            <person name="Gruber T.M."/>
            <person name="Ketchum K.A."/>
            <person name="Venter J.C."/>
            <person name="Tettelin H."/>
            <person name="Bryant D.A."/>
            <person name="Fraser C.M."/>
        </authorList>
    </citation>
    <scope>NUCLEOTIDE SEQUENCE [LARGE SCALE GENOMIC DNA]</scope>
    <source>
        <strain>ATCC 49652 / DSM 12025 / NBRC 103806 / TLS</strain>
    </source>
</reference>
<proteinExistence type="inferred from homology"/>
<feature type="chain" id="PRO_0000070759" description="Chaperone protein DnaJ">
    <location>
        <begin position="1"/>
        <end position="403"/>
    </location>
</feature>
<feature type="domain" description="J" evidence="1">
    <location>
        <begin position="4"/>
        <end position="69"/>
    </location>
</feature>
<feature type="repeat" description="CXXCXGXG motif">
    <location>
        <begin position="172"/>
        <end position="179"/>
    </location>
</feature>
<feature type="repeat" description="CXXCXGXG motif">
    <location>
        <begin position="188"/>
        <end position="195"/>
    </location>
</feature>
<feature type="repeat" description="CXXCXGXG motif">
    <location>
        <begin position="214"/>
        <end position="221"/>
    </location>
</feature>
<feature type="repeat" description="CXXCXGXG motif">
    <location>
        <begin position="228"/>
        <end position="235"/>
    </location>
</feature>
<feature type="zinc finger region" description="CR-type" evidence="1">
    <location>
        <begin position="159"/>
        <end position="240"/>
    </location>
</feature>
<feature type="binding site" evidence="1">
    <location>
        <position position="172"/>
    </location>
    <ligand>
        <name>Zn(2+)</name>
        <dbReference type="ChEBI" id="CHEBI:29105"/>
        <label>1</label>
    </ligand>
</feature>
<feature type="binding site" evidence="1">
    <location>
        <position position="175"/>
    </location>
    <ligand>
        <name>Zn(2+)</name>
        <dbReference type="ChEBI" id="CHEBI:29105"/>
        <label>1</label>
    </ligand>
</feature>
<feature type="binding site" evidence="1">
    <location>
        <position position="188"/>
    </location>
    <ligand>
        <name>Zn(2+)</name>
        <dbReference type="ChEBI" id="CHEBI:29105"/>
        <label>2</label>
    </ligand>
</feature>
<feature type="binding site" evidence="1">
    <location>
        <position position="191"/>
    </location>
    <ligand>
        <name>Zn(2+)</name>
        <dbReference type="ChEBI" id="CHEBI:29105"/>
        <label>2</label>
    </ligand>
</feature>
<feature type="binding site" evidence="1">
    <location>
        <position position="214"/>
    </location>
    <ligand>
        <name>Zn(2+)</name>
        <dbReference type="ChEBI" id="CHEBI:29105"/>
        <label>2</label>
    </ligand>
</feature>
<feature type="binding site" evidence="1">
    <location>
        <position position="217"/>
    </location>
    <ligand>
        <name>Zn(2+)</name>
        <dbReference type="ChEBI" id="CHEBI:29105"/>
        <label>2</label>
    </ligand>
</feature>
<feature type="binding site" evidence="1">
    <location>
        <position position="228"/>
    </location>
    <ligand>
        <name>Zn(2+)</name>
        <dbReference type="ChEBI" id="CHEBI:29105"/>
        <label>1</label>
    </ligand>
</feature>
<feature type="binding site" evidence="1">
    <location>
        <position position="231"/>
    </location>
    <ligand>
        <name>Zn(2+)</name>
        <dbReference type="ChEBI" id="CHEBI:29105"/>
        <label>1</label>
    </ligand>
</feature>
<protein>
    <recommendedName>
        <fullName evidence="1">Chaperone protein DnaJ</fullName>
    </recommendedName>
</protein>
<organism>
    <name type="scientific">Chlorobaculum tepidum (strain ATCC 49652 / DSM 12025 / NBRC 103806 / TLS)</name>
    <name type="common">Chlorobium tepidum</name>
    <dbReference type="NCBI Taxonomy" id="194439"/>
    <lineage>
        <taxon>Bacteria</taxon>
        <taxon>Pseudomonadati</taxon>
        <taxon>Chlorobiota</taxon>
        <taxon>Chlorobiia</taxon>
        <taxon>Chlorobiales</taxon>
        <taxon>Chlorobiaceae</taxon>
        <taxon>Chlorobaculum</taxon>
    </lineage>
</organism>
<evidence type="ECO:0000255" key="1">
    <source>
        <dbReference type="HAMAP-Rule" id="MF_01152"/>
    </source>
</evidence>
<accession>Q8KCD8</accession>
<keyword id="KW-0143">Chaperone</keyword>
<keyword id="KW-0963">Cytoplasm</keyword>
<keyword id="KW-0235">DNA replication</keyword>
<keyword id="KW-0479">Metal-binding</keyword>
<keyword id="KW-1185">Reference proteome</keyword>
<keyword id="KW-0677">Repeat</keyword>
<keyword id="KW-0346">Stress response</keyword>
<keyword id="KW-0862">Zinc</keyword>
<keyword id="KW-0863">Zinc-finger</keyword>
<name>DNAJ_CHLTE</name>